<keyword id="KW-0007">Acetylation</keyword>
<keyword id="KW-0274">FAD</keyword>
<keyword id="KW-0276">Fatty acid metabolism</keyword>
<keyword id="KW-0285">Flavoprotein</keyword>
<keyword id="KW-0443">Lipid metabolism</keyword>
<keyword id="KW-0496">Mitochondrion</keyword>
<keyword id="KW-0560">Oxidoreductase</keyword>
<keyword id="KW-0597">Phosphoprotein</keyword>
<keyword id="KW-1185">Reference proteome</keyword>
<keyword id="KW-0809">Transit peptide</keyword>
<feature type="transit peptide" description="Mitochondrion" evidence="2">
    <location>
        <begin position="1"/>
        <end position="24"/>
    </location>
</feature>
<feature type="chain" id="PRO_0000000499" description="Short-chain specific acyl-CoA dehydrogenase, mitochondrial">
    <location>
        <begin position="25"/>
        <end position="412"/>
    </location>
</feature>
<feature type="active site" description="Proton acceptor" evidence="2">
    <location>
        <position position="392"/>
    </location>
</feature>
<feature type="binding site" description="in other chain" evidence="2">
    <location>
        <begin position="152"/>
        <end position="161"/>
    </location>
    <ligand>
        <name>FAD</name>
        <dbReference type="ChEBI" id="CHEBI:57692"/>
        <note>ligand shared between dimeric partners</note>
    </ligand>
</feature>
<feature type="binding site" evidence="2">
    <location>
        <position position="161"/>
    </location>
    <ligand>
        <name>substrate</name>
    </ligand>
</feature>
<feature type="binding site" description="in other chain" evidence="2">
    <location>
        <begin position="185"/>
        <end position="187"/>
    </location>
    <ligand>
        <name>FAD</name>
        <dbReference type="ChEBI" id="CHEBI:57692"/>
        <note>ligand shared between dimeric partners</note>
    </ligand>
</feature>
<feature type="binding site" evidence="2">
    <location>
        <begin position="269"/>
        <end position="272"/>
    </location>
    <ligand>
        <name>substrate</name>
    </ligand>
</feature>
<feature type="binding site" evidence="2">
    <location>
        <position position="297"/>
    </location>
    <ligand>
        <name>FAD</name>
        <dbReference type="ChEBI" id="CHEBI:57692"/>
        <note>ligand shared between dimeric partners</note>
    </ligand>
</feature>
<feature type="binding site" description="in other chain" evidence="1">
    <location>
        <position position="308"/>
    </location>
    <ligand>
        <name>FAD</name>
        <dbReference type="ChEBI" id="CHEBI:57692"/>
        <note>ligand shared between dimeric partners</note>
    </ligand>
</feature>
<feature type="binding site" description="in other chain" evidence="2">
    <location>
        <begin position="365"/>
        <end position="369"/>
    </location>
    <ligand>
        <name>FAD</name>
        <dbReference type="ChEBI" id="CHEBI:57692"/>
        <note>ligand shared between dimeric partners</note>
    </ligand>
</feature>
<feature type="binding site" evidence="2">
    <location>
        <position position="393"/>
    </location>
    <ligand>
        <name>substrate</name>
    </ligand>
</feature>
<feature type="binding site" description="in other chain" evidence="2">
    <location>
        <begin position="394"/>
        <end position="396"/>
    </location>
    <ligand>
        <name>FAD</name>
        <dbReference type="ChEBI" id="CHEBI:57692"/>
        <note>ligand shared between dimeric partners</note>
    </ligand>
</feature>
<feature type="modified residue" description="Phosphothreonine" evidence="6">
    <location>
        <position position="27"/>
    </location>
</feature>
<feature type="modified residue" description="N6-acetyllysine; alternate" evidence="7">
    <location>
        <position position="51"/>
    </location>
</feature>
<feature type="modified residue" description="N6-succinyllysine; alternate" evidence="8">
    <location>
        <position position="51"/>
    </location>
</feature>
<feature type="modified residue" description="N6-acetyllysine" evidence="7">
    <location>
        <position position="72"/>
    </location>
</feature>
<feature type="modified residue" description="N6-acetyllysine; alternate" evidence="7">
    <location>
        <position position="129"/>
    </location>
</feature>
<feature type="modified residue" description="N6-succinyllysine; alternate" evidence="8">
    <location>
        <position position="129"/>
    </location>
</feature>
<feature type="modified residue" description="N6-acetyllysine" evidence="7">
    <location>
        <position position="208"/>
    </location>
</feature>
<feature type="modified residue" description="N6-acetyllysine; alternate" evidence="7">
    <location>
        <position position="262"/>
    </location>
</feature>
<feature type="modified residue" description="N6-succinyllysine; alternate" evidence="8">
    <location>
        <position position="262"/>
    </location>
</feature>
<feature type="modified residue" description="N6-acetyllysine" evidence="7">
    <location>
        <position position="292"/>
    </location>
</feature>
<feature type="modified residue" description="N6-acetyllysine; alternate" evidence="7">
    <location>
        <position position="306"/>
    </location>
</feature>
<feature type="modified residue" description="N6-succinyllysine; alternate" evidence="8">
    <location>
        <position position="306"/>
    </location>
</feature>
<feature type="sequence conflict" description="In Ref. 1; AAA16714." evidence="5" ref="1">
    <original>D</original>
    <variation>G</variation>
    <location>
        <position position="94"/>
    </location>
</feature>
<feature type="sequence conflict" description="In Ref. 1; AAA16714." evidence="5" ref="1">
    <original>A</original>
    <variation>R</variation>
    <location>
        <position position="348"/>
    </location>
</feature>
<feature type="sequence conflict" description="In Ref. 1; AAA16714." evidence="5" ref="1">
    <original>G</original>
    <variation>S</variation>
    <location>
        <position position="369"/>
    </location>
</feature>
<gene>
    <name type="primary">Acads</name>
</gene>
<evidence type="ECO:0000250" key="1"/>
<evidence type="ECO:0000250" key="2">
    <source>
        <dbReference type="UniProtKB" id="P15651"/>
    </source>
</evidence>
<evidence type="ECO:0000250" key="3">
    <source>
        <dbReference type="UniProtKB" id="P16219"/>
    </source>
</evidence>
<evidence type="ECO:0000250" key="4">
    <source>
        <dbReference type="UniProtKB" id="Q3ZBF6"/>
    </source>
</evidence>
<evidence type="ECO:0000305" key="5"/>
<evidence type="ECO:0007744" key="6">
    <source>
    </source>
</evidence>
<evidence type="ECO:0007744" key="7">
    <source>
    </source>
</evidence>
<evidence type="ECO:0007744" key="8">
    <source>
    </source>
</evidence>
<comment type="function">
    <text evidence="2">Short-chain specific acyl-CoA dehydrogenase is one of the acyl-CoA dehydrogenases that catalyze the first step of mitochondrial fatty acid beta-oxidation, an aerobic process breaking down fatty acids into acetyl-CoA and allowing the production of energy from fats. The first step of fatty acid beta-oxidation consists in the removal of one hydrogen from C-2 and C-3 of the straight-chain fatty acyl-CoA thioester, resulting in the formation of trans-2-enoyl-CoA. Among the different mitochondrial acyl-CoA dehydrogenases, short-chain specific acyl-CoA dehydrogenase acts specifically on acyl-CoAs with saturated 4 to 6 carbons long primary chains.</text>
</comment>
<comment type="catalytic activity">
    <reaction evidence="3">
        <text>a short-chain 2,3-saturated fatty acyl-CoA + oxidized [electron-transfer flavoprotein] + H(+) = a short-chain (2E)-enoyl-CoA + reduced [electron-transfer flavoprotein]</text>
        <dbReference type="Rhea" id="RHEA:47196"/>
        <dbReference type="Rhea" id="RHEA-COMP:10685"/>
        <dbReference type="Rhea" id="RHEA-COMP:10686"/>
        <dbReference type="ChEBI" id="CHEBI:15378"/>
        <dbReference type="ChEBI" id="CHEBI:57692"/>
        <dbReference type="ChEBI" id="CHEBI:58307"/>
        <dbReference type="ChEBI" id="CHEBI:87487"/>
        <dbReference type="ChEBI" id="CHEBI:87488"/>
        <dbReference type="EC" id="1.3.8.1"/>
    </reaction>
    <physiologicalReaction direction="left-to-right" evidence="3">
        <dbReference type="Rhea" id="RHEA:47197"/>
    </physiologicalReaction>
</comment>
<comment type="catalytic activity">
    <reaction evidence="3">
        <text>butanoyl-CoA + oxidized [electron-transfer flavoprotein] + H(+) = (2E)-butenoyl-CoA + reduced [electron-transfer flavoprotein]</text>
        <dbReference type="Rhea" id="RHEA:24004"/>
        <dbReference type="Rhea" id="RHEA-COMP:10685"/>
        <dbReference type="Rhea" id="RHEA-COMP:10686"/>
        <dbReference type="ChEBI" id="CHEBI:15378"/>
        <dbReference type="ChEBI" id="CHEBI:57332"/>
        <dbReference type="ChEBI" id="CHEBI:57371"/>
        <dbReference type="ChEBI" id="CHEBI:57692"/>
        <dbReference type="ChEBI" id="CHEBI:58307"/>
        <dbReference type="EC" id="1.3.8.1"/>
    </reaction>
    <physiologicalReaction direction="left-to-right" evidence="3">
        <dbReference type="Rhea" id="RHEA:24005"/>
    </physiologicalReaction>
</comment>
<comment type="catalytic activity">
    <reaction evidence="4">
        <text>pentanoyl-CoA + oxidized [electron-transfer flavoprotein] + H(+) = (2E)-pentenoyl-CoA + reduced [electron-transfer flavoprotein]</text>
        <dbReference type="Rhea" id="RHEA:43456"/>
        <dbReference type="Rhea" id="RHEA-COMP:10685"/>
        <dbReference type="Rhea" id="RHEA-COMP:10686"/>
        <dbReference type="ChEBI" id="CHEBI:15378"/>
        <dbReference type="ChEBI" id="CHEBI:57389"/>
        <dbReference type="ChEBI" id="CHEBI:57692"/>
        <dbReference type="ChEBI" id="CHEBI:58307"/>
        <dbReference type="ChEBI" id="CHEBI:86160"/>
    </reaction>
    <physiologicalReaction direction="left-to-right" evidence="3">
        <dbReference type="Rhea" id="RHEA:43457"/>
    </physiologicalReaction>
</comment>
<comment type="catalytic activity">
    <reaction evidence="3">
        <text>hexanoyl-CoA + oxidized [electron-transfer flavoprotein] + H(+) = (2E)-hexenoyl-CoA + reduced [electron-transfer flavoprotein]</text>
        <dbReference type="Rhea" id="RHEA:43464"/>
        <dbReference type="Rhea" id="RHEA-COMP:10685"/>
        <dbReference type="Rhea" id="RHEA-COMP:10686"/>
        <dbReference type="ChEBI" id="CHEBI:15378"/>
        <dbReference type="ChEBI" id="CHEBI:57692"/>
        <dbReference type="ChEBI" id="CHEBI:58307"/>
        <dbReference type="ChEBI" id="CHEBI:62077"/>
        <dbReference type="ChEBI" id="CHEBI:62620"/>
    </reaction>
    <physiologicalReaction direction="left-to-right" evidence="3">
        <dbReference type="Rhea" id="RHEA:43465"/>
    </physiologicalReaction>
</comment>
<comment type="cofactor">
    <cofactor evidence="2">
        <name>FAD</name>
        <dbReference type="ChEBI" id="CHEBI:57692"/>
    </cofactor>
    <text evidence="2">Binds 1 FAD per subunit.</text>
</comment>
<comment type="pathway">
    <text evidence="3">Lipid metabolism; mitochondrial fatty acid beta-oxidation.</text>
</comment>
<comment type="subunit">
    <text evidence="3">Homotetramer.</text>
</comment>
<comment type="subcellular location">
    <subcellularLocation>
        <location evidence="4">Mitochondrion matrix</location>
    </subcellularLocation>
</comment>
<comment type="similarity">
    <text evidence="5">Belongs to the acyl-CoA dehydrogenase family.</text>
</comment>
<organism>
    <name type="scientific">Mus musculus</name>
    <name type="common">Mouse</name>
    <dbReference type="NCBI Taxonomy" id="10090"/>
    <lineage>
        <taxon>Eukaryota</taxon>
        <taxon>Metazoa</taxon>
        <taxon>Chordata</taxon>
        <taxon>Craniata</taxon>
        <taxon>Vertebrata</taxon>
        <taxon>Euteleostomi</taxon>
        <taxon>Mammalia</taxon>
        <taxon>Eutheria</taxon>
        <taxon>Euarchontoglires</taxon>
        <taxon>Glires</taxon>
        <taxon>Rodentia</taxon>
        <taxon>Myomorpha</taxon>
        <taxon>Muroidea</taxon>
        <taxon>Muridae</taxon>
        <taxon>Murinae</taxon>
        <taxon>Mus</taxon>
        <taxon>Mus</taxon>
    </lineage>
</organism>
<reference key="1">
    <citation type="journal article" date="1993" name="Genomics">
        <title>Cloning and characterization of the mouse short-chain acyl-CoA dehydrogenase cDNA.</title>
        <authorList>
            <person name="Kelly C.L."/>
            <person name="Hinsdale M.E."/>
            <person name="Wood P.A."/>
        </authorList>
    </citation>
    <scope>NUCLEOTIDE SEQUENCE [MRNA]</scope>
</reference>
<reference key="2">
    <citation type="journal article" date="2005" name="Science">
        <title>The transcriptional landscape of the mammalian genome.</title>
        <authorList>
            <person name="Carninci P."/>
            <person name="Kasukawa T."/>
            <person name="Katayama S."/>
            <person name="Gough J."/>
            <person name="Frith M.C."/>
            <person name="Maeda N."/>
            <person name="Oyama R."/>
            <person name="Ravasi T."/>
            <person name="Lenhard B."/>
            <person name="Wells C."/>
            <person name="Kodzius R."/>
            <person name="Shimokawa K."/>
            <person name="Bajic V.B."/>
            <person name="Brenner S.E."/>
            <person name="Batalov S."/>
            <person name="Forrest A.R."/>
            <person name="Zavolan M."/>
            <person name="Davis M.J."/>
            <person name="Wilming L.G."/>
            <person name="Aidinis V."/>
            <person name="Allen J.E."/>
            <person name="Ambesi-Impiombato A."/>
            <person name="Apweiler R."/>
            <person name="Aturaliya R.N."/>
            <person name="Bailey T.L."/>
            <person name="Bansal M."/>
            <person name="Baxter L."/>
            <person name="Beisel K.W."/>
            <person name="Bersano T."/>
            <person name="Bono H."/>
            <person name="Chalk A.M."/>
            <person name="Chiu K.P."/>
            <person name="Choudhary V."/>
            <person name="Christoffels A."/>
            <person name="Clutterbuck D.R."/>
            <person name="Crowe M.L."/>
            <person name="Dalla E."/>
            <person name="Dalrymple B.P."/>
            <person name="de Bono B."/>
            <person name="Della Gatta G."/>
            <person name="di Bernardo D."/>
            <person name="Down T."/>
            <person name="Engstrom P."/>
            <person name="Fagiolini M."/>
            <person name="Faulkner G."/>
            <person name="Fletcher C.F."/>
            <person name="Fukushima T."/>
            <person name="Furuno M."/>
            <person name="Futaki S."/>
            <person name="Gariboldi M."/>
            <person name="Georgii-Hemming P."/>
            <person name="Gingeras T.R."/>
            <person name="Gojobori T."/>
            <person name="Green R.E."/>
            <person name="Gustincich S."/>
            <person name="Harbers M."/>
            <person name="Hayashi Y."/>
            <person name="Hensch T.K."/>
            <person name="Hirokawa N."/>
            <person name="Hill D."/>
            <person name="Huminiecki L."/>
            <person name="Iacono M."/>
            <person name="Ikeo K."/>
            <person name="Iwama A."/>
            <person name="Ishikawa T."/>
            <person name="Jakt M."/>
            <person name="Kanapin A."/>
            <person name="Katoh M."/>
            <person name="Kawasawa Y."/>
            <person name="Kelso J."/>
            <person name="Kitamura H."/>
            <person name="Kitano H."/>
            <person name="Kollias G."/>
            <person name="Krishnan S.P."/>
            <person name="Kruger A."/>
            <person name="Kummerfeld S.K."/>
            <person name="Kurochkin I.V."/>
            <person name="Lareau L.F."/>
            <person name="Lazarevic D."/>
            <person name="Lipovich L."/>
            <person name="Liu J."/>
            <person name="Liuni S."/>
            <person name="McWilliam S."/>
            <person name="Madan Babu M."/>
            <person name="Madera M."/>
            <person name="Marchionni L."/>
            <person name="Matsuda H."/>
            <person name="Matsuzawa S."/>
            <person name="Miki H."/>
            <person name="Mignone F."/>
            <person name="Miyake S."/>
            <person name="Morris K."/>
            <person name="Mottagui-Tabar S."/>
            <person name="Mulder N."/>
            <person name="Nakano N."/>
            <person name="Nakauchi H."/>
            <person name="Ng P."/>
            <person name="Nilsson R."/>
            <person name="Nishiguchi S."/>
            <person name="Nishikawa S."/>
            <person name="Nori F."/>
            <person name="Ohara O."/>
            <person name="Okazaki Y."/>
            <person name="Orlando V."/>
            <person name="Pang K.C."/>
            <person name="Pavan W.J."/>
            <person name="Pavesi G."/>
            <person name="Pesole G."/>
            <person name="Petrovsky N."/>
            <person name="Piazza S."/>
            <person name="Reed J."/>
            <person name="Reid J.F."/>
            <person name="Ring B.Z."/>
            <person name="Ringwald M."/>
            <person name="Rost B."/>
            <person name="Ruan Y."/>
            <person name="Salzberg S.L."/>
            <person name="Sandelin A."/>
            <person name="Schneider C."/>
            <person name="Schoenbach C."/>
            <person name="Sekiguchi K."/>
            <person name="Semple C.A."/>
            <person name="Seno S."/>
            <person name="Sessa L."/>
            <person name="Sheng Y."/>
            <person name="Shibata Y."/>
            <person name="Shimada H."/>
            <person name="Shimada K."/>
            <person name="Silva D."/>
            <person name="Sinclair B."/>
            <person name="Sperling S."/>
            <person name="Stupka E."/>
            <person name="Sugiura K."/>
            <person name="Sultana R."/>
            <person name="Takenaka Y."/>
            <person name="Taki K."/>
            <person name="Tammoja K."/>
            <person name="Tan S.L."/>
            <person name="Tang S."/>
            <person name="Taylor M.S."/>
            <person name="Tegner J."/>
            <person name="Teichmann S.A."/>
            <person name="Ueda H.R."/>
            <person name="van Nimwegen E."/>
            <person name="Verardo R."/>
            <person name="Wei C.L."/>
            <person name="Yagi K."/>
            <person name="Yamanishi H."/>
            <person name="Zabarovsky E."/>
            <person name="Zhu S."/>
            <person name="Zimmer A."/>
            <person name="Hide W."/>
            <person name="Bult C."/>
            <person name="Grimmond S.M."/>
            <person name="Teasdale R.D."/>
            <person name="Liu E.T."/>
            <person name="Brusic V."/>
            <person name="Quackenbush J."/>
            <person name="Wahlestedt C."/>
            <person name="Mattick J.S."/>
            <person name="Hume D.A."/>
            <person name="Kai C."/>
            <person name="Sasaki D."/>
            <person name="Tomaru Y."/>
            <person name="Fukuda S."/>
            <person name="Kanamori-Katayama M."/>
            <person name="Suzuki M."/>
            <person name="Aoki J."/>
            <person name="Arakawa T."/>
            <person name="Iida J."/>
            <person name="Imamura K."/>
            <person name="Itoh M."/>
            <person name="Kato T."/>
            <person name="Kawaji H."/>
            <person name="Kawagashira N."/>
            <person name="Kawashima T."/>
            <person name="Kojima M."/>
            <person name="Kondo S."/>
            <person name="Konno H."/>
            <person name="Nakano K."/>
            <person name="Ninomiya N."/>
            <person name="Nishio T."/>
            <person name="Okada M."/>
            <person name="Plessy C."/>
            <person name="Shibata K."/>
            <person name="Shiraki T."/>
            <person name="Suzuki S."/>
            <person name="Tagami M."/>
            <person name="Waki K."/>
            <person name="Watahiki A."/>
            <person name="Okamura-Oho Y."/>
            <person name="Suzuki H."/>
            <person name="Kawai J."/>
            <person name="Hayashizaki Y."/>
        </authorList>
    </citation>
    <scope>NUCLEOTIDE SEQUENCE [LARGE SCALE MRNA]</scope>
    <source>
        <strain>C57BL/6J</strain>
        <strain>NOD</strain>
        <tissue>Heart</tissue>
    </source>
</reference>
<reference key="3">
    <citation type="submission" date="2005-09" db="EMBL/GenBank/DDBJ databases">
        <authorList>
            <person name="Mural R.J."/>
            <person name="Adams M.D."/>
            <person name="Myers E.W."/>
            <person name="Smith H.O."/>
            <person name="Venter J.C."/>
        </authorList>
    </citation>
    <scope>NUCLEOTIDE SEQUENCE [LARGE SCALE GENOMIC DNA]</scope>
</reference>
<reference key="4">
    <citation type="journal article" date="2004" name="Genome Res.">
        <title>The status, quality, and expansion of the NIH full-length cDNA project: the Mammalian Gene Collection (MGC).</title>
        <authorList>
            <consortium name="The MGC Project Team"/>
        </authorList>
    </citation>
    <scope>NUCLEOTIDE SEQUENCE [LARGE SCALE MRNA]</scope>
    <source>
        <strain>FVB/N</strain>
        <tissue>Salivary gland</tissue>
    </source>
</reference>
<reference key="5">
    <citation type="journal article" date="2010" name="Cell">
        <title>A tissue-specific atlas of mouse protein phosphorylation and expression.</title>
        <authorList>
            <person name="Huttlin E.L."/>
            <person name="Jedrychowski M.P."/>
            <person name="Elias J.E."/>
            <person name="Goswami T."/>
            <person name="Rad R."/>
            <person name="Beausoleil S.A."/>
            <person name="Villen J."/>
            <person name="Haas W."/>
            <person name="Sowa M.E."/>
            <person name="Gygi S.P."/>
        </authorList>
    </citation>
    <scope>PHOSPHORYLATION [LARGE SCALE ANALYSIS] AT THR-27</scope>
    <scope>IDENTIFICATION BY MASS SPECTROMETRY [LARGE SCALE ANALYSIS]</scope>
    <source>
        <tissue>Brain</tissue>
        <tissue>Brown adipose tissue</tissue>
        <tissue>Heart</tissue>
        <tissue>Kidney</tissue>
        <tissue>Liver</tissue>
        <tissue>Lung</tissue>
        <tissue>Pancreas</tissue>
        <tissue>Spleen</tissue>
        <tissue>Testis</tissue>
    </source>
</reference>
<reference key="6">
    <citation type="journal article" date="2013" name="Mol. Cell">
        <title>SIRT5-mediated lysine desuccinylation impacts diverse metabolic pathways.</title>
        <authorList>
            <person name="Park J."/>
            <person name="Chen Y."/>
            <person name="Tishkoff D.X."/>
            <person name="Peng C."/>
            <person name="Tan M."/>
            <person name="Dai L."/>
            <person name="Xie Z."/>
            <person name="Zhang Y."/>
            <person name="Zwaans B.M."/>
            <person name="Skinner M.E."/>
            <person name="Lombard D.B."/>
            <person name="Zhao Y."/>
        </authorList>
    </citation>
    <scope>SUCCINYLATION [LARGE SCALE ANALYSIS] AT LYS-51; LYS-129; LYS-262 AND LYS-306</scope>
    <scope>IDENTIFICATION BY MASS SPECTROMETRY [LARGE SCALE ANALYSIS]</scope>
    <source>
        <tissue>Liver</tissue>
    </source>
</reference>
<reference key="7">
    <citation type="journal article" date="2013" name="Proc. Natl. Acad. Sci. U.S.A.">
        <title>Label-free quantitative proteomics of the lysine acetylome in mitochondria identifies substrates of SIRT3 in metabolic pathways.</title>
        <authorList>
            <person name="Rardin M.J."/>
            <person name="Newman J.C."/>
            <person name="Held J.M."/>
            <person name="Cusack M.P."/>
            <person name="Sorensen D.J."/>
            <person name="Li B."/>
            <person name="Schilling B."/>
            <person name="Mooney S.D."/>
            <person name="Kahn C.R."/>
            <person name="Verdin E."/>
            <person name="Gibson B.W."/>
        </authorList>
    </citation>
    <scope>ACETYLATION [LARGE SCALE ANALYSIS] AT LYS-51; LYS-72; LYS-129; LYS-208; LYS-262; LYS-292 AND LYS-306</scope>
    <scope>IDENTIFICATION BY MASS SPECTROMETRY [LARGE SCALE ANALYSIS]</scope>
    <source>
        <tissue>Liver</tissue>
    </source>
</reference>
<accession>Q07417</accession>
<accession>Q91W85</accession>
<proteinExistence type="evidence at protein level"/>
<dbReference type="EC" id="1.3.8.1" evidence="3"/>
<dbReference type="EMBL" id="L11163">
    <property type="protein sequence ID" value="AAA16714.1"/>
    <property type="molecule type" value="mRNA"/>
</dbReference>
<dbReference type="EMBL" id="AK155361">
    <property type="protein sequence ID" value="BAE33217.1"/>
    <property type="molecule type" value="mRNA"/>
</dbReference>
<dbReference type="EMBL" id="AK169428">
    <property type="protein sequence ID" value="BAE41170.1"/>
    <property type="molecule type" value="mRNA"/>
</dbReference>
<dbReference type="EMBL" id="CH466529">
    <property type="protein sequence ID" value="EDL19883.1"/>
    <property type="molecule type" value="Genomic_DNA"/>
</dbReference>
<dbReference type="EMBL" id="BC016259">
    <property type="protein sequence ID" value="AAH16259.1"/>
    <property type="molecule type" value="mRNA"/>
</dbReference>
<dbReference type="CCDS" id="CCDS19579.1"/>
<dbReference type="PIR" id="I49605">
    <property type="entry name" value="I49605"/>
</dbReference>
<dbReference type="RefSeq" id="NP_031409.2">
    <property type="nucleotide sequence ID" value="NM_007383.3"/>
</dbReference>
<dbReference type="SMR" id="Q07417"/>
<dbReference type="BioGRID" id="197915">
    <property type="interactions" value="22"/>
</dbReference>
<dbReference type="FunCoup" id="Q07417">
    <property type="interactions" value="1032"/>
</dbReference>
<dbReference type="IntAct" id="Q07417">
    <property type="interactions" value="1"/>
</dbReference>
<dbReference type="MINT" id="Q07417"/>
<dbReference type="STRING" id="10090.ENSMUSP00000031524"/>
<dbReference type="GlyGen" id="Q07417">
    <property type="glycosylation" value="2 sites, 1 O-linked glycan (1 site)"/>
</dbReference>
<dbReference type="iPTMnet" id="Q07417"/>
<dbReference type="PhosphoSitePlus" id="Q07417"/>
<dbReference type="SwissPalm" id="Q07417"/>
<dbReference type="REPRODUCTION-2DPAGE" id="Q07417"/>
<dbReference type="jPOST" id="Q07417"/>
<dbReference type="PaxDb" id="10090-ENSMUSP00000031524"/>
<dbReference type="PeptideAtlas" id="Q07417"/>
<dbReference type="ProteomicsDB" id="285832"/>
<dbReference type="Pumba" id="Q07417"/>
<dbReference type="Antibodypedia" id="1579">
    <property type="antibodies" value="274 antibodies from 31 providers"/>
</dbReference>
<dbReference type="DNASU" id="11409"/>
<dbReference type="Ensembl" id="ENSMUST00000031524.11">
    <property type="protein sequence ID" value="ENSMUSP00000031524.8"/>
    <property type="gene ID" value="ENSMUSG00000029545.14"/>
</dbReference>
<dbReference type="GeneID" id="11409"/>
<dbReference type="KEGG" id="mmu:11409"/>
<dbReference type="UCSC" id="uc008zdb.2">
    <property type="organism name" value="mouse"/>
</dbReference>
<dbReference type="AGR" id="MGI:87868"/>
<dbReference type="CTD" id="35"/>
<dbReference type="MGI" id="MGI:87868">
    <property type="gene designation" value="Acads"/>
</dbReference>
<dbReference type="VEuPathDB" id="HostDB:ENSMUSG00000029545"/>
<dbReference type="eggNOG" id="KOG0139">
    <property type="taxonomic scope" value="Eukaryota"/>
</dbReference>
<dbReference type="GeneTree" id="ENSGT00940000158866"/>
<dbReference type="HOGENOM" id="CLU_018204_0_2_1"/>
<dbReference type="InParanoid" id="Q07417"/>
<dbReference type="OMA" id="LYREAPM"/>
<dbReference type="OrthoDB" id="9988775at2759"/>
<dbReference type="PhylomeDB" id="Q07417"/>
<dbReference type="TreeFam" id="TF105019"/>
<dbReference type="Reactome" id="R-MMU-77350">
    <property type="pathway name" value="Beta oxidation of hexanoyl-CoA to butanoyl-CoA"/>
</dbReference>
<dbReference type="Reactome" id="R-MMU-77352">
    <property type="pathway name" value="Beta oxidation of butanoyl-CoA to acetyl-CoA"/>
</dbReference>
<dbReference type="UniPathway" id="UPA00660"/>
<dbReference type="BioGRID-ORCS" id="11409">
    <property type="hits" value="3 hits in 80 CRISPR screens"/>
</dbReference>
<dbReference type="PRO" id="PR:Q07417"/>
<dbReference type="Proteomes" id="UP000000589">
    <property type="component" value="Chromosome 5"/>
</dbReference>
<dbReference type="RNAct" id="Q07417">
    <property type="molecule type" value="protein"/>
</dbReference>
<dbReference type="Bgee" id="ENSMUSG00000029545">
    <property type="expression patterns" value="Expressed in white adipose tissue and 64 other cell types or tissues"/>
</dbReference>
<dbReference type="GO" id="GO:0005759">
    <property type="term" value="C:mitochondrial matrix"/>
    <property type="evidence" value="ECO:0000250"/>
    <property type="project" value="UniProtKB"/>
</dbReference>
<dbReference type="GO" id="GO:0005739">
    <property type="term" value="C:mitochondrion"/>
    <property type="evidence" value="ECO:0007005"/>
    <property type="project" value="MGI"/>
</dbReference>
<dbReference type="GO" id="GO:0003995">
    <property type="term" value="F:acyl-CoA dehydrogenase activity"/>
    <property type="evidence" value="ECO:0000250"/>
    <property type="project" value="UniProtKB"/>
</dbReference>
<dbReference type="GO" id="GO:0050660">
    <property type="term" value="F:flavin adenine dinucleotide binding"/>
    <property type="evidence" value="ECO:0007669"/>
    <property type="project" value="InterPro"/>
</dbReference>
<dbReference type="GO" id="GO:0016937">
    <property type="term" value="F:short-chain fatty acyl-CoA dehydrogenase activity"/>
    <property type="evidence" value="ECO:0000250"/>
    <property type="project" value="UniProtKB"/>
</dbReference>
<dbReference type="GO" id="GO:0033539">
    <property type="term" value="P:fatty acid beta-oxidation using acyl-CoA dehydrogenase"/>
    <property type="evidence" value="ECO:0007669"/>
    <property type="project" value="Ensembl"/>
</dbReference>
<dbReference type="CDD" id="cd01158">
    <property type="entry name" value="SCAD_SBCAD"/>
    <property type="match status" value="1"/>
</dbReference>
<dbReference type="FunFam" id="1.10.540.10:FF:000002">
    <property type="entry name" value="Acyl-CoA dehydrogenase FadE19"/>
    <property type="match status" value="1"/>
</dbReference>
<dbReference type="FunFam" id="1.20.140.10:FF:000004">
    <property type="entry name" value="Acyl-CoA dehydrogenase FadE25"/>
    <property type="match status" value="1"/>
</dbReference>
<dbReference type="FunFam" id="2.40.110.10:FF:000001">
    <property type="entry name" value="Acyl-CoA dehydrogenase, mitochondrial"/>
    <property type="match status" value="1"/>
</dbReference>
<dbReference type="Gene3D" id="1.10.540.10">
    <property type="entry name" value="Acyl-CoA dehydrogenase/oxidase, N-terminal domain"/>
    <property type="match status" value="1"/>
</dbReference>
<dbReference type="Gene3D" id="2.40.110.10">
    <property type="entry name" value="Butyryl-CoA Dehydrogenase, subunit A, domain 2"/>
    <property type="match status" value="1"/>
</dbReference>
<dbReference type="Gene3D" id="1.20.140.10">
    <property type="entry name" value="Butyryl-CoA Dehydrogenase, subunit A, domain 3"/>
    <property type="match status" value="1"/>
</dbReference>
<dbReference type="InterPro" id="IPR006089">
    <property type="entry name" value="Acyl-CoA_DH_CS"/>
</dbReference>
<dbReference type="InterPro" id="IPR006091">
    <property type="entry name" value="Acyl-CoA_Oxase/DH_mid-dom"/>
</dbReference>
<dbReference type="InterPro" id="IPR046373">
    <property type="entry name" value="Acyl-CoA_Oxase/DH_mid-dom_sf"/>
</dbReference>
<dbReference type="InterPro" id="IPR036250">
    <property type="entry name" value="AcylCo_DH-like_C"/>
</dbReference>
<dbReference type="InterPro" id="IPR009075">
    <property type="entry name" value="AcylCo_DH/oxidase_C"/>
</dbReference>
<dbReference type="InterPro" id="IPR013786">
    <property type="entry name" value="AcylCoA_DH/ox_N"/>
</dbReference>
<dbReference type="InterPro" id="IPR037069">
    <property type="entry name" value="AcylCoA_DH/ox_N_sf"/>
</dbReference>
<dbReference type="InterPro" id="IPR009100">
    <property type="entry name" value="AcylCoA_DH/oxidase_NM_dom_sf"/>
</dbReference>
<dbReference type="PANTHER" id="PTHR43884">
    <property type="entry name" value="ACYL-COA DEHYDROGENASE"/>
    <property type="match status" value="1"/>
</dbReference>
<dbReference type="PANTHER" id="PTHR43884:SF12">
    <property type="entry name" value="ISOVALERYL-COA DEHYDROGENASE, MITOCHONDRIAL-RELATED"/>
    <property type="match status" value="1"/>
</dbReference>
<dbReference type="Pfam" id="PF00441">
    <property type="entry name" value="Acyl-CoA_dh_1"/>
    <property type="match status" value="1"/>
</dbReference>
<dbReference type="Pfam" id="PF02770">
    <property type="entry name" value="Acyl-CoA_dh_M"/>
    <property type="match status" value="1"/>
</dbReference>
<dbReference type="Pfam" id="PF02771">
    <property type="entry name" value="Acyl-CoA_dh_N"/>
    <property type="match status" value="1"/>
</dbReference>
<dbReference type="PIRSF" id="PIRSF016578">
    <property type="entry name" value="HsaA"/>
    <property type="match status" value="1"/>
</dbReference>
<dbReference type="SUPFAM" id="SSF47203">
    <property type="entry name" value="Acyl-CoA dehydrogenase C-terminal domain-like"/>
    <property type="match status" value="1"/>
</dbReference>
<dbReference type="SUPFAM" id="SSF56645">
    <property type="entry name" value="Acyl-CoA dehydrogenase NM domain-like"/>
    <property type="match status" value="1"/>
</dbReference>
<dbReference type="PROSITE" id="PS00072">
    <property type="entry name" value="ACYL_COA_DH_1"/>
    <property type="match status" value="1"/>
</dbReference>
<dbReference type="PROSITE" id="PS00073">
    <property type="entry name" value="ACYL_COA_DH_2"/>
    <property type="match status" value="1"/>
</dbReference>
<protein>
    <recommendedName>
        <fullName>Short-chain specific acyl-CoA dehydrogenase, mitochondrial</fullName>
        <shortName>SCAD</shortName>
        <ecNumber evidence="3">1.3.8.1</ecNumber>
    </recommendedName>
    <alternativeName>
        <fullName>Butyryl-CoA dehydrogenase</fullName>
    </alternativeName>
</protein>
<name>ACADS_MOUSE</name>
<sequence>MAAALLARARGPLRRALGVRDWRRLHTVYQSVELPETHQMLRQTCRDFAEKELVPIAAQLDREHLFPTAQVKKMGELGLLAMDVPEELSGAGLDYLAYSIALEEISRACASTGVIMSVNNSLYLGPILKFGSAQQKQQWITPFTNGDKIGCFALSEPGNGSDAGAASTTAREEGDSWVLNGTKAWITNSWEASATVVFASTDRSRQNKGISAFLVPMPTPGLTLGKKEDKLGIRASSTANLIFEDCRIPKENLLGEPGMGFKIAMQTLDMGRIGIASQALGIAQASLDCAVKYAENRNAFGAPLTKLQNIQFKLADMALALESARLLTWRAAMLKDNKKPFTKESAMAKLAASEAATAISHQAIQILGGMGYVTEMPAERYYRDARITEIYEGTSEIQRLVIAGHLLRSYRS</sequence>